<dbReference type="EC" id="6.3.4.2" evidence="1"/>
<dbReference type="EMBL" id="CP000647">
    <property type="protein sequence ID" value="ABR78525.1"/>
    <property type="molecule type" value="Genomic_DNA"/>
</dbReference>
<dbReference type="RefSeq" id="WP_004142808.1">
    <property type="nucleotide sequence ID" value="NC_009648.1"/>
</dbReference>
<dbReference type="SMR" id="A6TD54"/>
<dbReference type="STRING" id="272620.KPN_03124"/>
<dbReference type="MEROPS" id="C26.964"/>
<dbReference type="jPOST" id="A6TD54"/>
<dbReference type="PaxDb" id="272620-KPN_03124"/>
<dbReference type="EnsemblBacteria" id="ABR78525">
    <property type="protein sequence ID" value="ABR78525"/>
    <property type="gene ID" value="KPN_03124"/>
</dbReference>
<dbReference type="KEGG" id="kpn:KPN_03124"/>
<dbReference type="HOGENOM" id="CLU_011675_5_0_6"/>
<dbReference type="UniPathway" id="UPA00159">
    <property type="reaction ID" value="UER00277"/>
</dbReference>
<dbReference type="Proteomes" id="UP000000265">
    <property type="component" value="Chromosome"/>
</dbReference>
<dbReference type="GO" id="GO:0005829">
    <property type="term" value="C:cytosol"/>
    <property type="evidence" value="ECO:0007669"/>
    <property type="project" value="TreeGrafter"/>
</dbReference>
<dbReference type="GO" id="GO:0005524">
    <property type="term" value="F:ATP binding"/>
    <property type="evidence" value="ECO:0007669"/>
    <property type="project" value="UniProtKB-KW"/>
</dbReference>
<dbReference type="GO" id="GO:0003883">
    <property type="term" value="F:CTP synthase activity"/>
    <property type="evidence" value="ECO:0007669"/>
    <property type="project" value="UniProtKB-UniRule"/>
</dbReference>
<dbReference type="GO" id="GO:0004359">
    <property type="term" value="F:glutaminase activity"/>
    <property type="evidence" value="ECO:0007669"/>
    <property type="project" value="RHEA"/>
</dbReference>
<dbReference type="GO" id="GO:0042802">
    <property type="term" value="F:identical protein binding"/>
    <property type="evidence" value="ECO:0007669"/>
    <property type="project" value="TreeGrafter"/>
</dbReference>
<dbReference type="GO" id="GO:0046872">
    <property type="term" value="F:metal ion binding"/>
    <property type="evidence" value="ECO:0007669"/>
    <property type="project" value="UniProtKB-KW"/>
</dbReference>
<dbReference type="GO" id="GO:0044210">
    <property type="term" value="P:'de novo' CTP biosynthetic process"/>
    <property type="evidence" value="ECO:0007669"/>
    <property type="project" value="UniProtKB-UniRule"/>
</dbReference>
<dbReference type="GO" id="GO:0019856">
    <property type="term" value="P:pyrimidine nucleobase biosynthetic process"/>
    <property type="evidence" value="ECO:0007669"/>
    <property type="project" value="TreeGrafter"/>
</dbReference>
<dbReference type="CDD" id="cd03113">
    <property type="entry name" value="CTPS_N"/>
    <property type="match status" value="1"/>
</dbReference>
<dbReference type="CDD" id="cd01746">
    <property type="entry name" value="GATase1_CTP_Synthase"/>
    <property type="match status" value="1"/>
</dbReference>
<dbReference type="FunFam" id="3.40.50.300:FF:000009">
    <property type="entry name" value="CTP synthase"/>
    <property type="match status" value="1"/>
</dbReference>
<dbReference type="FunFam" id="3.40.50.880:FF:000002">
    <property type="entry name" value="CTP synthase"/>
    <property type="match status" value="1"/>
</dbReference>
<dbReference type="Gene3D" id="3.40.50.880">
    <property type="match status" value="1"/>
</dbReference>
<dbReference type="Gene3D" id="3.40.50.300">
    <property type="entry name" value="P-loop containing nucleotide triphosphate hydrolases"/>
    <property type="match status" value="1"/>
</dbReference>
<dbReference type="HAMAP" id="MF_01227">
    <property type="entry name" value="PyrG"/>
    <property type="match status" value="1"/>
</dbReference>
<dbReference type="InterPro" id="IPR029062">
    <property type="entry name" value="Class_I_gatase-like"/>
</dbReference>
<dbReference type="InterPro" id="IPR004468">
    <property type="entry name" value="CTP_synthase"/>
</dbReference>
<dbReference type="InterPro" id="IPR017456">
    <property type="entry name" value="CTP_synthase_N"/>
</dbReference>
<dbReference type="InterPro" id="IPR017926">
    <property type="entry name" value="GATASE"/>
</dbReference>
<dbReference type="InterPro" id="IPR033828">
    <property type="entry name" value="GATase1_CTP_Synthase"/>
</dbReference>
<dbReference type="InterPro" id="IPR027417">
    <property type="entry name" value="P-loop_NTPase"/>
</dbReference>
<dbReference type="NCBIfam" id="NF003792">
    <property type="entry name" value="PRK05380.1"/>
    <property type="match status" value="1"/>
</dbReference>
<dbReference type="NCBIfam" id="TIGR00337">
    <property type="entry name" value="PyrG"/>
    <property type="match status" value="1"/>
</dbReference>
<dbReference type="PANTHER" id="PTHR11550">
    <property type="entry name" value="CTP SYNTHASE"/>
    <property type="match status" value="1"/>
</dbReference>
<dbReference type="PANTHER" id="PTHR11550:SF0">
    <property type="entry name" value="CTP SYNTHASE-RELATED"/>
    <property type="match status" value="1"/>
</dbReference>
<dbReference type="Pfam" id="PF06418">
    <property type="entry name" value="CTP_synth_N"/>
    <property type="match status" value="1"/>
</dbReference>
<dbReference type="Pfam" id="PF00117">
    <property type="entry name" value="GATase"/>
    <property type="match status" value="1"/>
</dbReference>
<dbReference type="SUPFAM" id="SSF52317">
    <property type="entry name" value="Class I glutamine amidotransferase-like"/>
    <property type="match status" value="1"/>
</dbReference>
<dbReference type="SUPFAM" id="SSF52540">
    <property type="entry name" value="P-loop containing nucleoside triphosphate hydrolases"/>
    <property type="match status" value="1"/>
</dbReference>
<dbReference type="PROSITE" id="PS51273">
    <property type="entry name" value="GATASE_TYPE_1"/>
    <property type="match status" value="1"/>
</dbReference>
<keyword id="KW-0067">ATP-binding</keyword>
<keyword id="KW-0315">Glutamine amidotransferase</keyword>
<keyword id="KW-0436">Ligase</keyword>
<keyword id="KW-0460">Magnesium</keyword>
<keyword id="KW-0479">Metal-binding</keyword>
<keyword id="KW-0547">Nucleotide-binding</keyword>
<keyword id="KW-0665">Pyrimidine biosynthesis</keyword>
<comment type="function">
    <text evidence="1">Catalyzes the ATP-dependent amination of UTP to CTP with either L-glutamine or ammonia as the source of nitrogen. Regulates intracellular CTP levels through interactions with the four ribonucleotide triphosphates.</text>
</comment>
<comment type="catalytic activity">
    <reaction evidence="1">
        <text>UTP + L-glutamine + ATP + H2O = CTP + L-glutamate + ADP + phosphate + 2 H(+)</text>
        <dbReference type="Rhea" id="RHEA:26426"/>
        <dbReference type="ChEBI" id="CHEBI:15377"/>
        <dbReference type="ChEBI" id="CHEBI:15378"/>
        <dbReference type="ChEBI" id="CHEBI:29985"/>
        <dbReference type="ChEBI" id="CHEBI:30616"/>
        <dbReference type="ChEBI" id="CHEBI:37563"/>
        <dbReference type="ChEBI" id="CHEBI:43474"/>
        <dbReference type="ChEBI" id="CHEBI:46398"/>
        <dbReference type="ChEBI" id="CHEBI:58359"/>
        <dbReference type="ChEBI" id="CHEBI:456216"/>
        <dbReference type="EC" id="6.3.4.2"/>
    </reaction>
</comment>
<comment type="catalytic activity">
    <reaction evidence="1">
        <text>L-glutamine + H2O = L-glutamate + NH4(+)</text>
        <dbReference type="Rhea" id="RHEA:15889"/>
        <dbReference type="ChEBI" id="CHEBI:15377"/>
        <dbReference type="ChEBI" id="CHEBI:28938"/>
        <dbReference type="ChEBI" id="CHEBI:29985"/>
        <dbReference type="ChEBI" id="CHEBI:58359"/>
    </reaction>
</comment>
<comment type="catalytic activity">
    <reaction evidence="1">
        <text>UTP + NH4(+) + ATP = CTP + ADP + phosphate + 2 H(+)</text>
        <dbReference type="Rhea" id="RHEA:16597"/>
        <dbReference type="ChEBI" id="CHEBI:15378"/>
        <dbReference type="ChEBI" id="CHEBI:28938"/>
        <dbReference type="ChEBI" id="CHEBI:30616"/>
        <dbReference type="ChEBI" id="CHEBI:37563"/>
        <dbReference type="ChEBI" id="CHEBI:43474"/>
        <dbReference type="ChEBI" id="CHEBI:46398"/>
        <dbReference type="ChEBI" id="CHEBI:456216"/>
    </reaction>
</comment>
<comment type="activity regulation">
    <text evidence="1">Allosterically activated by GTP, when glutamine is the substrate; GTP has no effect on the reaction when ammonia is the substrate. The allosteric effector GTP functions by stabilizing the protein conformation that binds the tetrahedral intermediate(s) formed during glutamine hydrolysis. Inhibited by the product CTP, via allosteric rather than competitive inhibition.</text>
</comment>
<comment type="pathway">
    <text evidence="1">Pyrimidine metabolism; CTP biosynthesis via de novo pathway; CTP from UDP: step 2/2.</text>
</comment>
<comment type="subunit">
    <text evidence="1">Homotetramer.</text>
</comment>
<comment type="miscellaneous">
    <text evidence="1">CTPSs have evolved a hybrid strategy for distinguishing between UTP and CTP. The overlapping regions of the product feedback inhibitory and substrate sites recognize a common feature in both compounds, the triphosphate moiety. To differentiate isosteric substrate and product pyrimidine rings, an additional pocket far from the expected kinase/ligase catalytic site, specifically recognizes the cytosine and ribose portions of the product inhibitor.</text>
</comment>
<comment type="similarity">
    <text evidence="1">Belongs to the CTP synthase family.</text>
</comment>
<sequence length="545" mass="60163">MTTNYIFVTGGVVSSLGKGIAAASLAAILEARGLNVTIMKLDPYINVDPGTMSPIQHGEVFVTEDGAETDLDLGHYERFIRTKMTRRNNFTTGRIYSDVLRKERRGDYLGATVQVIPHITNAIKERVLAGGEGHDVVLVEIGGTVGDIESLPFLEAIRQMAVEIGREHTLFMHLTLVPYMAAAGEVKTKPTQHSVKELLSIGIQPDILICRSDRAVPANERAKIALFCNVPEKAVISLKDVDSIYKIPGLLKSQGLDDYICKRFSLTCPEANLAEWEQVIYEEANPAGEVTIGMVGKYIELPDAYKSVIEALKHGGLKNRVTVNIKLIDSQDVETRGVEILKDLDAILIPGGFGYRGVEGKIATARYARENNIPYLGICLGMQVALIEFARNVAGMENANSTEFVPDCKYPVVALITEWRDEDGNVEVRSEKSDLGGTMRLGAQQCQLSDDSLVRQLYGEPTITERHRHRYEVNNMLLKPIEAAGLRVAGRSGDDQLVEIIEVPNHPWFVACQFHPEFTSTPRDGHPLFAGFVKAASEYQKRQAK</sequence>
<protein>
    <recommendedName>
        <fullName evidence="1">CTP synthase</fullName>
        <ecNumber evidence="1">6.3.4.2</ecNumber>
    </recommendedName>
    <alternativeName>
        <fullName evidence="1">Cytidine 5'-triphosphate synthase</fullName>
    </alternativeName>
    <alternativeName>
        <fullName evidence="1">Cytidine triphosphate synthetase</fullName>
        <shortName evidence="1">CTP synthetase</shortName>
        <shortName evidence="1">CTPS</shortName>
    </alternativeName>
    <alternativeName>
        <fullName evidence="1">UTP--ammonia ligase</fullName>
    </alternativeName>
</protein>
<feature type="chain" id="PRO_1000139476" description="CTP synthase">
    <location>
        <begin position="1"/>
        <end position="545"/>
    </location>
</feature>
<feature type="domain" description="Glutamine amidotransferase type-1" evidence="1">
    <location>
        <begin position="291"/>
        <end position="542"/>
    </location>
</feature>
<feature type="region of interest" description="Amidoligase domain" evidence="1">
    <location>
        <begin position="1"/>
        <end position="266"/>
    </location>
</feature>
<feature type="active site" description="Nucleophile; for glutamine hydrolysis" evidence="1">
    <location>
        <position position="379"/>
    </location>
</feature>
<feature type="active site" evidence="1">
    <location>
        <position position="515"/>
    </location>
</feature>
<feature type="active site" evidence="1">
    <location>
        <position position="517"/>
    </location>
</feature>
<feature type="binding site" evidence="1">
    <location>
        <position position="14"/>
    </location>
    <ligand>
        <name>CTP</name>
        <dbReference type="ChEBI" id="CHEBI:37563"/>
        <note>allosteric inhibitor</note>
    </ligand>
</feature>
<feature type="binding site" evidence="1">
    <location>
        <position position="14"/>
    </location>
    <ligand>
        <name>UTP</name>
        <dbReference type="ChEBI" id="CHEBI:46398"/>
    </ligand>
</feature>
<feature type="binding site" evidence="1">
    <location>
        <begin position="15"/>
        <end position="20"/>
    </location>
    <ligand>
        <name>ATP</name>
        <dbReference type="ChEBI" id="CHEBI:30616"/>
    </ligand>
</feature>
<feature type="binding site" evidence="1">
    <location>
        <position position="72"/>
    </location>
    <ligand>
        <name>ATP</name>
        <dbReference type="ChEBI" id="CHEBI:30616"/>
    </ligand>
</feature>
<feature type="binding site" evidence="1">
    <location>
        <position position="72"/>
    </location>
    <ligand>
        <name>Mg(2+)</name>
        <dbReference type="ChEBI" id="CHEBI:18420"/>
    </ligand>
</feature>
<feature type="binding site" evidence="1">
    <location>
        <position position="140"/>
    </location>
    <ligand>
        <name>Mg(2+)</name>
        <dbReference type="ChEBI" id="CHEBI:18420"/>
    </ligand>
</feature>
<feature type="binding site" evidence="1">
    <location>
        <begin position="147"/>
        <end position="149"/>
    </location>
    <ligand>
        <name>CTP</name>
        <dbReference type="ChEBI" id="CHEBI:37563"/>
        <note>allosteric inhibitor</note>
    </ligand>
</feature>
<feature type="binding site" evidence="1">
    <location>
        <begin position="187"/>
        <end position="192"/>
    </location>
    <ligand>
        <name>CTP</name>
        <dbReference type="ChEBI" id="CHEBI:37563"/>
        <note>allosteric inhibitor</note>
    </ligand>
</feature>
<feature type="binding site" evidence="1">
    <location>
        <begin position="187"/>
        <end position="192"/>
    </location>
    <ligand>
        <name>UTP</name>
        <dbReference type="ChEBI" id="CHEBI:46398"/>
    </ligand>
</feature>
<feature type="binding site" evidence="1">
    <location>
        <position position="223"/>
    </location>
    <ligand>
        <name>CTP</name>
        <dbReference type="ChEBI" id="CHEBI:37563"/>
        <note>allosteric inhibitor</note>
    </ligand>
</feature>
<feature type="binding site" evidence="1">
    <location>
        <position position="223"/>
    </location>
    <ligand>
        <name>UTP</name>
        <dbReference type="ChEBI" id="CHEBI:46398"/>
    </ligand>
</feature>
<feature type="binding site" evidence="1">
    <location>
        <begin position="239"/>
        <end position="241"/>
    </location>
    <ligand>
        <name>ATP</name>
        <dbReference type="ChEBI" id="CHEBI:30616"/>
    </ligand>
</feature>
<feature type="binding site" evidence="1">
    <location>
        <position position="352"/>
    </location>
    <ligand>
        <name>L-glutamine</name>
        <dbReference type="ChEBI" id="CHEBI:58359"/>
    </ligand>
</feature>
<feature type="binding site" evidence="1">
    <location>
        <begin position="380"/>
        <end position="383"/>
    </location>
    <ligand>
        <name>L-glutamine</name>
        <dbReference type="ChEBI" id="CHEBI:58359"/>
    </ligand>
</feature>
<feature type="binding site" evidence="1">
    <location>
        <position position="403"/>
    </location>
    <ligand>
        <name>L-glutamine</name>
        <dbReference type="ChEBI" id="CHEBI:58359"/>
    </ligand>
</feature>
<feature type="binding site" evidence="1">
    <location>
        <position position="470"/>
    </location>
    <ligand>
        <name>L-glutamine</name>
        <dbReference type="ChEBI" id="CHEBI:58359"/>
    </ligand>
</feature>
<organism>
    <name type="scientific">Klebsiella pneumoniae subsp. pneumoniae (strain ATCC 700721 / MGH 78578)</name>
    <dbReference type="NCBI Taxonomy" id="272620"/>
    <lineage>
        <taxon>Bacteria</taxon>
        <taxon>Pseudomonadati</taxon>
        <taxon>Pseudomonadota</taxon>
        <taxon>Gammaproteobacteria</taxon>
        <taxon>Enterobacterales</taxon>
        <taxon>Enterobacteriaceae</taxon>
        <taxon>Klebsiella/Raoultella group</taxon>
        <taxon>Klebsiella</taxon>
        <taxon>Klebsiella pneumoniae complex</taxon>
    </lineage>
</organism>
<accession>A6TD54</accession>
<reference key="1">
    <citation type="submission" date="2006-09" db="EMBL/GenBank/DDBJ databases">
        <authorList>
            <consortium name="The Klebsiella pneumonia Genome Sequencing Project"/>
            <person name="McClelland M."/>
            <person name="Sanderson E.K."/>
            <person name="Spieth J."/>
            <person name="Clifton W.S."/>
            <person name="Latreille P."/>
            <person name="Sabo A."/>
            <person name="Pepin K."/>
            <person name="Bhonagiri V."/>
            <person name="Porwollik S."/>
            <person name="Ali J."/>
            <person name="Wilson R.K."/>
        </authorList>
    </citation>
    <scope>NUCLEOTIDE SEQUENCE [LARGE SCALE GENOMIC DNA]</scope>
    <source>
        <strain>ATCC 700721 / MGH 78578</strain>
    </source>
</reference>
<gene>
    <name evidence="1" type="primary">pyrG</name>
    <name type="ordered locus">KPN78578_30640</name>
    <name type="ORF">KPN_03124</name>
</gene>
<name>PYRG_KLEP7</name>
<proteinExistence type="inferred from homology"/>
<evidence type="ECO:0000255" key="1">
    <source>
        <dbReference type="HAMAP-Rule" id="MF_01227"/>
    </source>
</evidence>